<accession>A7FZ46</accession>
<reference key="1">
    <citation type="journal article" date="2007" name="PLoS ONE">
        <title>Analysis of the neurotoxin complex genes in Clostridium botulinum A1-A4 and B1 strains: BoNT/A3, /Ba4 and /B1 clusters are located within plasmids.</title>
        <authorList>
            <person name="Smith T.J."/>
            <person name="Hill K.K."/>
            <person name="Foley B.T."/>
            <person name="Detter J.C."/>
            <person name="Munk A.C."/>
            <person name="Bruce D.C."/>
            <person name="Doggett N.A."/>
            <person name="Smith L.A."/>
            <person name="Marks J.D."/>
            <person name="Xie G."/>
            <person name="Brettin T.S."/>
        </authorList>
    </citation>
    <scope>NUCLEOTIDE SEQUENCE [LARGE SCALE GENOMIC DNA]</scope>
    <source>
        <strain>ATCC 19397 / Type A</strain>
    </source>
</reference>
<sequence>MAAGMKGKRSRRRKERKNVEHGCAHIKSTFNNSIVTITDSVGNTLSWASAGGLGFRGSRKSTPFAAQMAAETAAKAAMEHGLKSIEVYVKGPGSGREAAIRSLQAAGLEVTLIKDVTPIPHNGCRPPKRRRV</sequence>
<feature type="chain" id="PRO_0000323336" description="Small ribosomal subunit protein uS11">
    <location>
        <begin position="1"/>
        <end position="132"/>
    </location>
</feature>
<feature type="region of interest" description="Disordered" evidence="2">
    <location>
        <begin position="1"/>
        <end position="20"/>
    </location>
</feature>
<feature type="compositionally biased region" description="Basic residues" evidence="2">
    <location>
        <begin position="1"/>
        <end position="16"/>
    </location>
</feature>
<proteinExistence type="inferred from homology"/>
<comment type="function">
    <text evidence="1">Located on the platform of the 30S subunit, it bridges several disparate RNA helices of the 16S rRNA. Forms part of the Shine-Dalgarno cleft in the 70S ribosome.</text>
</comment>
<comment type="subunit">
    <text evidence="1">Part of the 30S ribosomal subunit. Interacts with proteins S7 and S18. Binds to IF-3.</text>
</comment>
<comment type="similarity">
    <text evidence="1">Belongs to the universal ribosomal protein uS11 family.</text>
</comment>
<dbReference type="EMBL" id="CP000726">
    <property type="protein sequence ID" value="ABS35776.1"/>
    <property type="molecule type" value="Genomic_DNA"/>
</dbReference>
<dbReference type="RefSeq" id="WP_003401717.1">
    <property type="nucleotide sequence ID" value="NC_009697.1"/>
</dbReference>
<dbReference type="SMR" id="A7FZ46"/>
<dbReference type="GeneID" id="5184361"/>
<dbReference type="KEGG" id="cba:CLB_3510"/>
<dbReference type="HOGENOM" id="CLU_072439_5_0_9"/>
<dbReference type="GO" id="GO:1990904">
    <property type="term" value="C:ribonucleoprotein complex"/>
    <property type="evidence" value="ECO:0007669"/>
    <property type="project" value="UniProtKB-KW"/>
</dbReference>
<dbReference type="GO" id="GO:0005840">
    <property type="term" value="C:ribosome"/>
    <property type="evidence" value="ECO:0007669"/>
    <property type="project" value="UniProtKB-KW"/>
</dbReference>
<dbReference type="GO" id="GO:0019843">
    <property type="term" value="F:rRNA binding"/>
    <property type="evidence" value="ECO:0007669"/>
    <property type="project" value="UniProtKB-UniRule"/>
</dbReference>
<dbReference type="GO" id="GO:0003735">
    <property type="term" value="F:structural constituent of ribosome"/>
    <property type="evidence" value="ECO:0007669"/>
    <property type="project" value="InterPro"/>
</dbReference>
<dbReference type="GO" id="GO:0006412">
    <property type="term" value="P:translation"/>
    <property type="evidence" value="ECO:0007669"/>
    <property type="project" value="UniProtKB-UniRule"/>
</dbReference>
<dbReference type="FunFam" id="3.30.420.80:FF:000001">
    <property type="entry name" value="30S ribosomal protein S11"/>
    <property type="match status" value="1"/>
</dbReference>
<dbReference type="Gene3D" id="3.30.420.80">
    <property type="entry name" value="Ribosomal protein S11"/>
    <property type="match status" value="1"/>
</dbReference>
<dbReference type="HAMAP" id="MF_01310">
    <property type="entry name" value="Ribosomal_uS11"/>
    <property type="match status" value="1"/>
</dbReference>
<dbReference type="InterPro" id="IPR001971">
    <property type="entry name" value="Ribosomal_uS11"/>
</dbReference>
<dbReference type="InterPro" id="IPR019981">
    <property type="entry name" value="Ribosomal_uS11_bac-type"/>
</dbReference>
<dbReference type="InterPro" id="IPR018102">
    <property type="entry name" value="Ribosomal_uS11_CS"/>
</dbReference>
<dbReference type="InterPro" id="IPR036967">
    <property type="entry name" value="Ribosomal_uS11_sf"/>
</dbReference>
<dbReference type="NCBIfam" id="NF003698">
    <property type="entry name" value="PRK05309.1"/>
    <property type="match status" value="1"/>
</dbReference>
<dbReference type="NCBIfam" id="TIGR03632">
    <property type="entry name" value="uS11_bact"/>
    <property type="match status" value="1"/>
</dbReference>
<dbReference type="PANTHER" id="PTHR11759">
    <property type="entry name" value="40S RIBOSOMAL PROTEIN S14/30S RIBOSOMAL PROTEIN S11"/>
    <property type="match status" value="1"/>
</dbReference>
<dbReference type="Pfam" id="PF00411">
    <property type="entry name" value="Ribosomal_S11"/>
    <property type="match status" value="1"/>
</dbReference>
<dbReference type="PIRSF" id="PIRSF002131">
    <property type="entry name" value="Ribosomal_S11"/>
    <property type="match status" value="1"/>
</dbReference>
<dbReference type="SUPFAM" id="SSF53137">
    <property type="entry name" value="Translational machinery components"/>
    <property type="match status" value="1"/>
</dbReference>
<dbReference type="PROSITE" id="PS00054">
    <property type="entry name" value="RIBOSOMAL_S11"/>
    <property type="match status" value="1"/>
</dbReference>
<organism>
    <name type="scientific">Clostridium botulinum (strain ATCC 19397 / Type A)</name>
    <dbReference type="NCBI Taxonomy" id="441770"/>
    <lineage>
        <taxon>Bacteria</taxon>
        <taxon>Bacillati</taxon>
        <taxon>Bacillota</taxon>
        <taxon>Clostridia</taxon>
        <taxon>Eubacteriales</taxon>
        <taxon>Clostridiaceae</taxon>
        <taxon>Clostridium</taxon>
    </lineage>
</organism>
<keyword id="KW-0687">Ribonucleoprotein</keyword>
<keyword id="KW-0689">Ribosomal protein</keyword>
<keyword id="KW-0694">RNA-binding</keyword>
<keyword id="KW-0699">rRNA-binding</keyword>
<evidence type="ECO:0000255" key="1">
    <source>
        <dbReference type="HAMAP-Rule" id="MF_01310"/>
    </source>
</evidence>
<evidence type="ECO:0000256" key="2">
    <source>
        <dbReference type="SAM" id="MobiDB-lite"/>
    </source>
</evidence>
<evidence type="ECO:0000305" key="3"/>
<name>RS11_CLOB1</name>
<gene>
    <name evidence="1" type="primary">rpsK</name>
    <name type="ordered locus">CLB_3510</name>
</gene>
<protein>
    <recommendedName>
        <fullName evidence="1">Small ribosomal subunit protein uS11</fullName>
    </recommendedName>
    <alternativeName>
        <fullName evidence="3">30S ribosomal protein S11</fullName>
    </alternativeName>
</protein>